<accession>P91809</accession>
<organism>
    <name type="scientific">Strongylocentrotus purpuratus</name>
    <name type="common">Purple sea urchin</name>
    <dbReference type="NCBI Taxonomy" id="7668"/>
    <lineage>
        <taxon>Eukaryota</taxon>
        <taxon>Metazoa</taxon>
        <taxon>Echinodermata</taxon>
        <taxon>Eleutherozoa</taxon>
        <taxon>Echinozoa</taxon>
        <taxon>Echinoidea</taxon>
        <taxon>Euechinoidea</taxon>
        <taxon>Echinacea</taxon>
        <taxon>Camarodonta</taxon>
        <taxon>Echinidea</taxon>
        <taxon>Strongylocentrotidae</taxon>
        <taxon>Strongylocentrotus</taxon>
    </lineage>
</organism>
<feature type="chain" id="PRO_0000153968" description="TATA-box-binding protein">
    <location>
        <begin position="1"/>
        <end position="265"/>
    </location>
</feature>
<feature type="repeat" description="1">
    <location>
        <begin position="91"/>
        <end position="167"/>
    </location>
</feature>
<feature type="repeat" description="2">
    <location>
        <begin position="181"/>
        <end position="258"/>
    </location>
</feature>
<feature type="region of interest" description="Disordered" evidence="1">
    <location>
        <begin position="1"/>
        <end position="40"/>
    </location>
</feature>
<feature type="compositionally biased region" description="Polar residues" evidence="1">
    <location>
        <begin position="18"/>
        <end position="29"/>
    </location>
</feature>
<dbReference type="EMBL" id="U86586">
    <property type="protein sequence ID" value="AAB47272.1"/>
    <property type="molecule type" value="mRNA"/>
</dbReference>
<dbReference type="RefSeq" id="NP_999786.1">
    <property type="nucleotide sequence ID" value="NM_214621.1"/>
</dbReference>
<dbReference type="SMR" id="P91809"/>
<dbReference type="FunCoup" id="P91809">
    <property type="interactions" value="2220"/>
</dbReference>
<dbReference type="STRING" id="7668.P91809"/>
<dbReference type="EnsemblMetazoa" id="NM_214621">
    <property type="protein sequence ID" value="NP_999786"/>
    <property type="gene ID" value="GeneID_373479"/>
</dbReference>
<dbReference type="GeneID" id="373479"/>
<dbReference type="KEGG" id="spu:373479"/>
<dbReference type="CTD" id="6908"/>
<dbReference type="eggNOG" id="KOG3302">
    <property type="taxonomic scope" value="Eukaryota"/>
</dbReference>
<dbReference type="HOGENOM" id="CLU_060161_4_1_1"/>
<dbReference type="InParanoid" id="P91809"/>
<dbReference type="OMA" id="HMMPMSE"/>
<dbReference type="OrthoDB" id="2127950at2759"/>
<dbReference type="PhylomeDB" id="P91809"/>
<dbReference type="Proteomes" id="UP000007110">
    <property type="component" value="Unassembled WGS sequence"/>
</dbReference>
<dbReference type="GO" id="GO:0005634">
    <property type="term" value="C:nucleus"/>
    <property type="evidence" value="ECO:0007669"/>
    <property type="project" value="UniProtKB-SubCell"/>
</dbReference>
<dbReference type="GO" id="GO:0003677">
    <property type="term" value="F:DNA binding"/>
    <property type="evidence" value="ECO:0007669"/>
    <property type="project" value="UniProtKB-KW"/>
</dbReference>
<dbReference type="GO" id="GO:0016251">
    <property type="term" value="F:RNA polymerase II general transcription initiation factor activity"/>
    <property type="evidence" value="ECO:0000318"/>
    <property type="project" value="GO_Central"/>
</dbReference>
<dbReference type="GO" id="GO:0006352">
    <property type="term" value="P:DNA-templated transcription initiation"/>
    <property type="evidence" value="ECO:0000318"/>
    <property type="project" value="GO_Central"/>
</dbReference>
<dbReference type="CDD" id="cd04516">
    <property type="entry name" value="TBP_eukaryotes"/>
    <property type="match status" value="1"/>
</dbReference>
<dbReference type="FunFam" id="3.30.310.10:FF:000001">
    <property type="entry name" value="TATA-box-binding protein 2"/>
    <property type="match status" value="1"/>
</dbReference>
<dbReference type="FunFam" id="3.30.310.10:FF:000002">
    <property type="entry name" value="TATA-box-binding protein 2"/>
    <property type="match status" value="1"/>
</dbReference>
<dbReference type="Gene3D" id="3.30.310.10">
    <property type="entry name" value="TATA-Binding Protein"/>
    <property type="match status" value="2"/>
</dbReference>
<dbReference type="HAMAP" id="MF_00408">
    <property type="entry name" value="TATA_bind_prot_arch"/>
    <property type="match status" value="1"/>
</dbReference>
<dbReference type="InterPro" id="IPR000814">
    <property type="entry name" value="TBP"/>
</dbReference>
<dbReference type="InterPro" id="IPR030491">
    <property type="entry name" value="TBP_CS"/>
</dbReference>
<dbReference type="InterPro" id="IPR012295">
    <property type="entry name" value="TBP_dom_sf"/>
</dbReference>
<dbReference type="InterPro" id="IPR033710">
    <property type="entry name" value="TBP_eukaryotic"/>
</dbReference>
<dbReference type="PANTHER" id="PTHR10126">
    <property type="entry name" value="TATA-BOX BINDING PROTEIN"/>
    <property type="match status" value="1"/>
</dbReference>
<dbReference type="Pfam" id="PF00352">
    <property type="entry name" value="TBP"/>
    <property type="match status" value="2"/>
</dbReference>
<dbReference type="PRINTS" id="PR00686">
    <property type="entry name" value="TIFACTORIID"/>
</dbReference>
<dbReference type="SUPFAM" id="SSF55945">
    <property type="entry name" value="TATA-box binding protein-like"/>
    <property type="match status" value="2"/>
</dbReference>
<dbReference type="PROSITE" id="PS00351">
    <property type="entry name" value="TFIID"/>
    <property type="match status" value="2"/>
</dbReference>
<name>TBP_STRPU</name>
<reference key="1">
    <citation type="submission" date="1997-02" db="EMBL/GenBank/DDBJ databases">
        <authorList>
            <person name="Rybacki L."/>
            <person name="Childs G."/>
        </authorList>
    </citation>
    <scope>NUCLEOTIDE SEQUENCE [MRNA]</scope>
</reference>
<protein>
    <recommendedName>
        <fullName>TATA-box-binding protein</fullName>
    </recommendedName>
    <alternativeName>
        <fullName>TATA sequence-binding protein</fullName>
        <shortName>TBP</shortName>
    </alternativeName>
    <alternativeName>
        <fullName>TATA-binding factor</fullName>
    </alternativeName>
    <alternativeName>
        <fullName>TATA-box factor</fullName>
    </alternativeName>
    <alternativeName>
        <fullName>Transcription initiation factor TFIID TBP subunit</fullName>
    </alternativeName>
</protein>
<keyword id="KW-0238">DNA-binding</keyword>
<keyword id="KW-0539">Nucleus</keyword>
<keyword id="KW-1185">Reference proteome</keyword>
<keyword id="KW-0677">Repeat</keyword>
<keyword id="KW-0804">Transcription</keyword>
<proteinExistence type="evidence at transcript level"/>
<sequence length="265" mass="29108">MYNPSQAVPVSLHKNQDNQDGGQQRSHYPQISSQQSQSYLSVPSIGTPSFGSVGSVSSLAPGSSFIPPSPMAPLTPATPASSESSGIVPQLQNIVSTVNLNCRLDLKKIALHARNAEYNPKRFAAVIMRIREPRTTALIFSSGKMVCTGAKREDNSRLAARKYARVVQKLGFAAKFLDFKIQNMVGSCDVKFPIRLEGLVLTHGQFSSYEPELFPGLIYRMVKPRIVLLIFVSGKVVLTGAKVRQEIYDAFNNIYPILKSFKKTS</sequence>
<evidence type="ECO:0000256" key="1">
    <source>
        <dbReference type="SAM" id="MobiDB-lite"/>
    </source>
</evidence>
<evidence type="ECO:0000305" key="2"/>
<comment type="function">
    <text>General transcription factor that functions at the core of the DNA-binding multiprotein factor TFIID. Binding of TFIID to the TATA box is the initial transcriptional step of the pre-initiation complex (PIC), playing a role in the activation of eukaryotic genes transcribed by RNA polymerase II.</text>
</comment>
<comment type="subunit">
    <text>Belongs to the TFIID complex together with the TBP-associated factors (TAFs). Binds DNA as monomer.</text>
</comment>
<comment type="subcellular location">
    <subcellularLocation>
        <location>Nucleus</location>
    </subcellularLocation>
</comment>
<comment type="similarity">
    <text evidence="2">Belongs to the TBP family.</text>
</comment>